<dbReference type="EC" id="5.2.1.8"/>
<dbReference type="EMBL" id="AF455393">
    <property type="protein sequence ID" value="AAL57849.1"/>
    <property type="molecule type" value="Genomic_DNA"/>
</dbReference>
<dbReference type="SMR" id="Q8X191"/>
<dbReference type="PaxDb" id="5061-CADANGAP00010101"/>
<dbReference type="VEuPathDB" id="FungiDB:An12g08680"/>
<dbReference type="VEuPathDB" id="FungiDB:ASPNIDRAFT2_1183225"/>
<dbReference type="VEuPathDB" id="FungiDB:ATCC64974_34720"/>
<dbReference type="VEuPathDB" id="FungiDB:M747DRAFT_257237"/>
<dbReference type="eggNOG" id="KOG0881">
    <property type="taxonomic scope" value="Eukaryota"/>
</dbReference>
<dbReference type="GO" id="GO:0071013">
    <property type="term" value="C:catalytic step 2 spliceosome"/>
    <property type="evidence" value="ECO:0007669"/>
    <property type="project" value="TreeGrafter"/>
</dbReference>
<dbReference type="GO" id="GO:0003755">
    <property type="term" value="F:peptidyl-prolyl cis-trans isomerase activity"/>
    <property type="evidence" value="ECO:0007669"/>
    <property type="project" value="UniProtKB-KW"/>
</dbReference>
<dbReference type="GO" id="GO:0006457">
    <property type="term" value="P:protein folding"/>
    <property type="evidence" value="ECO:0007669"/>
    <property type="project" value="InterPro"/>
</dbReference>
<dbReference type="FunFam" id="2.40.100.10:FF:000008">
    <property type="entry name" value="Peptidyl-prolyl cis-trans isomerase"/>
    <property type="match status" value="1"/>
</dbReference>
<dbReference type="Gene3D" id="2.40.100.10">
    <property type="entry name" value="Cyclophilin-like"/>
    <property type="match status" value="1"/>
</dbReference>
<dbReference type="InterPro" id="IPR029000">
    <property type="entry name" value="Cyclophilin-like_dom_sf"/>
</dbReference>
<dbReference type="InterPro" id="IPR024936">
    <property type="entry name" value="Cyclophilin-type_PPIase"/>
</dbReference>
<dbReference type="InterPro" id="IPR020892">
    <property type="entry name" value="Cyclophilin-type_PPIase_CS"/>
</dbReference>
<dbReference type="InterPro" id="IPR002130">
    <property type="entry name" value="Cyclophilin-type_PPIase_dom"/>
</dbReference>
<dbReference type="InterPro" id="IPR044666">
    <property type="entry name" value="Cyclophilin_A-like"/>
</dbReference>
<dbReference type="PANTHER" id="PTHR45625">
    <property type="entry name" value="PEPTIDYL-PROLYL CIS-TRANS ISOMERASE-RELATED"/>
    <property type="match status" value="1"/>
</dbReference>
<dbReference type="PANTHER" id="PTHR45625:SF4">
    <property type="entry name" value="PEPTIDYLPROLYL ISOMERASE DOMAIN AND WD REPEAT-CONTAINING PROTEIN 1"/>
    <property type="match status" value="1"/>
</dbReference>
<dbReference type="Pfam" id="PF00160">
    <property type="entry name" value="Pro_isomerase"/>
    <property type="match status" value="1"/>
</dbReference>
<dbReference type="PIRSF" id="PIRSF001467">
    <property type="entry name" value="Peptidylpro_ismrse"/>
    <property type="match status" value="1"/>
</dbReference>
<dbReference type="PRINTS" id="PR00153">
    <property type="entry name" value="CSAPPISMRASE"/>
</dbReference>
<dbReference type="SUPFAM" id="SSF50891">
    <property type="entry name" value="Cyclophilin-like"/>
    <property type="match status" value="1"/>
</dbReference>
<dbReference type="PROSITE" id="PS00170">
    <property type="entry name" value="CSA_PPIASE_1"/>
    <property type="match status" value="1"/>
</dbReference>
<dbReference type="PROSITE" id="PS50072">
    <property type="entry name" value="CSA_PPIASE_2"/>
    <property type="match status" value="1"/>
</dbReference>
<proteinExistence type="inferred from homology"/>
<reference key="1">
    <citation type="submission" date="2001-12" db="EMBL/GenBank/DDBJ databases">
        <authorList>
            <person name="Derkx P.M.F."/>
        </authorList>
    </citation>
    <scope>NUCLEOTIDE SEQUENCE [GENOMIC DNA]</scope>
</reference>
<name>PPIL1_ASPNG</name>
<protein>
    <recommendedName>
        <fullName>Peptidyl-prolyl cis-trans isomerase-like 1</fullName>
        <shortName>PPIase</shortName>
        <ecNumber>5.2.1.8</ecNumber>
    </recommendedName>
    <alternativeName>
        <fullName>Rotamase</fullName>
    </alternativeName>
</protein>
<feature type="chain" id="PRO_0000232962" description="Peptidyl-prolyl cis-trans isomerase-like 1">
    <location>
        <begin position="1"/>
        <end position="162"/>
    </location>
</feature>
<feature type="domain" description="PPIase cyclophilin-type" evidence="2">
    <location>
        <begin position="1"/>
        <end position="155"/>
    </location>
</feature>
<evidence type="ECO:0000250" key="1"/>
<evidence type="ECO:0000255" key="2">
    <source>
        <dbReference type="PROSITE-ProRule" id="PRU00156"/>
    </source>
</evidence>
<evidence type="ECO:0000305" key="3"/>
<gene>
    <name type="primary">cypC</name>
</gene>
<sequence>MATDVAFDTSMGSFTVELYNAHAPKTCKNFATLAQRGYYNNVIFHRIIPNFMVQTGDPTGTGRGGSSIYGEKFEDEINPNLKHTGAGILSMANSGPNNNGSQFFITLAPQPWLDGKHTIFGRVKSGMRVIQRMGLVKTNSEDRPVDGVKILRARIVEETGDE</sequence>
<keyword id="KW-0413">Isomerase</keyword>
<keyword id="KW-0697">Rotamase</keyword>
<comment type="function">
    <text evidence="1">PPIases accelerate the folding of proteins. It catalyzes the cis-trans isomerization of proline imidic peptide bonds in oligopeptides (By similarity).</text>
</comment>
<comment type="catalytic activity">
    <reaction>
        <text>[protein]-peptidylproline (omega=180) = [protein]-peptidylproline (omega=0)</text>
        <dbReference type="Rhea" id="RHEA:16237"/>
        <dbReference type="Rhea" id="RHEA-COMP:10747"/>
        <dbReference type="Rhea" id="RHEA-COMP:10748"/>
        <dbReference type="ChEBI" id="CHEBI:83833"/>
        <dbReference type="ChEBI" id="CHEBI:83834"/>
        <dbReference type="EC" id="5.2.1.8"/>
    </reaction>
</comment>
<comment type="similarity">
    <text evidence="3">Belongs to the cyclophilin-type PPIase family. PPIL1 subfamily.</text>
</comment>
<organism>
    <name type="scientific">Aspergillus niger</name>
    <dbReference type="NCBI Taxonomy" id="5061"/>
    <lineage>
        <taxon>Eukaryota</taxon>
        <taxon>Fungi</taxon>
        <taxon>Dikarya</taxon>
        <taxon>Ascomycota</taxon>
        <taxon>Pezizomycotina</taxon>
        <taxon>Eurotiomycetes</taxon>
        <taxon>Eurotiomycetidae</taxon>
        <taxon>Eurotiales</taxon>
        <taxon>Aspergillaceae</taxon>
        <taxon>Aspergillus</taxon>
        <taxon>Aspergillus subgen. Circumdati</taxon>
    </lineage>
</organism>
<accession>Q8X191</accession>